<name>EIF2A_SCHPO</name>
<evidence type="ECO:0000250" key="1"/>
<evidence type="ECO:0000250" key="2">
    <source>
        <dbReference type="UniProtKB" id="Q9BY44"/>
    </source>
</evidence>
<evidence type="ECO:0000256" key="3">
    <source>
        <dbReference type="SAM" id="MobiDB-lite"/>
    </source>
</evidence>
<evidence type="ECO:0000305" key="4"/>
<evidence type="ECO:0007829" key="5">
    <source>
        <dbReference type="PDB" id="3WJ9"/>
    </source>
</evidence>
<protein>
    <recommendedName>
        <fullName>Eukaryotic translation initiation factor 2A</fullName>
        <shortName>eIF-2A</shortName>
    </recommendedName>
</protein>
<reference key="1">
    <citation type="journal article" date="2002" name="Nature">
        <title>The genome sequence of Schizosaccharomyces pombe.</title>
        <authorList>
            <person name="Wood V."/>
            <person name="Gwilliam R."/>
            <person name="Rajandream M.A."/>
            <person name="Lyne M.H."/>
            <person name="Lyne R."/>
            <person name="Stewart A."/>
            <person name="Sgouros J.G."/>
            <person name="Peat N."/>
            <person name="Hayles J."/>
            <person name="Baker S.G."/>
            <person name="Basham D."/>
            <person name="Bowman S."/>
            <person name="Brooks K."/>
            <person name="Brown D."/>
            <person name="Brown S."/>
            <person name="Chillingworth T."/>
            <person name="Churcher C.M."/>
            <person name="Collins M."/>
            <person name="Connor R."/>
            <person name="Cronin A."/>
            <person name="Davis P."/>
            <person name="Feltwell T."/>
            <person name="Fraser A."/>
            <person name="Gentles S."/>
            <person name="Goble A."/>
            <person name="Hamlin N."/>
            <person name="Harris D.E."/>
            <person name="Hidalgo J."/>
            <person name="Hodgson G."/>
            <person name="Holroyd S."/>
            <person name="Hornsby T."/>
            <person name="Howarth S."/>
            <person name="Huckle E.J."/>
            <person name="Hunt S."/>
            <person name="Jagels K."/>
            <person name="James K.D."/>
            <person name="Jones L."/>
            <person name="Jones M."/>
            <person name="Leather S."/>
            <person name="McDonald S."/>
            <person name="McLean J."/>
            <person name="Mooney P."/>
            <person name="Moule S."/>
            <person name="Mungall K.L."/>
            <person name="Murphy L.D."/>
            <person name="Niblett D."/>
            <person name="Odell C."/>
            <person name="Oliver K."/>
            <person name="O'Neil S."/>
            <person name="Pearson D."/>
            <person name="Quail M.A."/>
            <person name="Rabbinowitsch E."/>
            <person name="Rutherford K.M."/>
            <person name="Rutter S."/>
            <person name="Saunders D."/>
            <person name="Seeger K."/>
            <person name="Sharp S."/>
            <person name="Skelton J."/>
            <person name="Simmonds M.N."/>
            <person name="Squares R."/>
            <person name="Squares S."/>
            <person name="Stevens K."/>
            <person name="Taylor K."/>
            <person name="Taylor R.G."/>
            <person name="Tivey A."/>
            <person name="Walsh S.V."/>
            <person name="Warren T."/>
            <person name="Whitehead S."/>
            <person name="Woodward J.R."/>
            <person name="Volckaert G."/>
            <person name="Aert R."/>
            <person name="Robben J."/>
            <person name="Grymonprez B."/>
            <person name="Weltjens I."/>
            <person name="Vanstreels E."/>
            <person name="Rieger M."/>
            <person name="Schaefer M."/>
            <person name="Mueller-Auer S."/>
            <person name="Gabel C."/>
            <person name="Fuchs M."/>
            <person name="Duesterhoeft A."/>
            <person name="Fritzc C."/>
            <person name="Holzer E."/>
            <person name="Moestl D."/>
            <person name="Hilbert H."/>
            <person name="Borzym K."/>
            <person name="Langer I."/>
            <person name="Beck A."/>
            <person name="Lehrach H."/>
            <person name="Reinhardt R."/>
            <person name="Pohl T.M."/>
            <person name="Eger P."/>
            <person name="Zimmermann W."/>
            <person name="Wedler H."/>
            <person name="Wambutt R."/>
            <person name="Purnelle B."/>
            <person name="Goffeau A."/>
            <person name="Cadieu E."/>
            <person name="Dreano S."/>
            <person name="Gloux S."/>
            <person name="Lelaure V."/>
            <person name="Mottier S."/>
            <person name="Galibert F."/>
            <person name="Aves S.J."/>
            <person name="Xiang Z."/>
            <person name="Hunt C."/>
            <person name="Moore K."/>
            <person name="Hurst S.M."/>
            <person name="Lucas M."/>
            <person name="Rochet M."/>
            <person name="Gaillardin C."/>
            <person name="Tallada V.A."/>
            <person name="Garzon A."/>
            <person name="Thode G."/>
            <person name="Daga R.R."/>
            <person name="Cruzado L."/>
            <person name="Jimenez J."/>
            <person name="Sanchez M."/>
            <person name="del Rey F."/>
            <person name="Benito J."/>
            <person name="Dominguez A."/>
            <person name="Revuelta J.L."/>
            <person name="Moreno S."/>
            <person name="Armstrong J."/>
            <person name="Forsburg S.L."/>
            <person name="Cerutti L."/>
            <person name="Lowe T."/>
            <person name="McCombie W.R."/>
            <person name="Paulsen I."/>
            <person name="Potashkin J."/>
            <person name="Shpakovski G.V."/>
            <person name="Ussery D."/>
            <person name="Barrell B.G."/>
            <person name="Nurse P."/>
        </authorList>
    </citation>
    <scope>NUCLEOTIDE SEQUENCE [LARGE SCALE GENOMIC DNA]</scope>
    <source>
        <strain>972 / ATCC 24843</strain>
    </source>
</reference>
<gene>
    <name type="ORF">SPBC4B4.04</name>
</gene>
<comment type="function">
    <text evidence="2">Functions in the early steps of protein synthesis of a small number of specific mRNAs. Acts by directing the binding of methionyl-tRNAi to 40S ribosomal subunits. In contrast to the eIF-2 complex, it binds methionyl-tRNAi to 40S subunits in a codon-dependent manner, whereas the eIF-2 complex binds methionyl-tRNAi to 40S subunits in a GTP-dependent manner.</text>
</comment>
<comment type="subcellular location">
    <subcellularLocation>
        <location evidence="1">Cytoplasm</location>
    </subcellularLocation>
</comment>
<comment type="similarity">
    <text evidence="4">Belongs to the WD repeat EIF2A family.</text>
</comment>
<organism>
    <name type="scientific">Schizosaccharomyces pombe (strain 972 / ATCC 24843)</name>
    <name type="common">Fission yeast</name>
    <dbReference type="NCBI Taxonomy" id="284812"/>
    <lineage>
        <taxon>Eukaryota</taxon>
        <taxon>Fungi</taxon>
        <taxon>Dikarya</taxon>
        <taxon>Ascomycota</taxon>
        <taxon>Taphrinomycotina</taxon>
        <taxon>Schizosaccharomycetes</taxon>
        <taxon>Schizosaccharomycetales</taxon>
        <taxon>Schizosaccharomycetaceae</taxon>
        <taxon>Schizosaccharomyces</taxon>
    </lineage>
</organism>
<dbReference type="EMBL" id="CU329671">
    <property type="protein sequence ID" value="CAA19284.1"/>
    <property type="molecule type" value="Genomic_DNA"/>
</dbReference>
<dbReference type="PIR" id="T40476">
    <property type="entry name" value="T40476"/>
</dbReference>
<dbReference type="PDB" id="3WJ9">
    <property type="method" value="X-ray"/>
    <property type="resolution" value="2.51 A"/>
    <property type="chains" value="A/B=2-412"/>
</dbReference>
<dbReference type="PDBsum" id="3WJ9"/>
<dbReference type="SMR" id="O74965"/>
<dbReference type="BioGRID" id="277515">
    <property type="interactions" value="175"/>
</dbReference>
<dbReference type="FunCoup" id="O74965">
    <property type="interactions" value="847"/>
</dbReference>
<dbReference type="STRING" id="284812.O74965"/>
<dbReference type="iPTMnet" id="O74965"/>
<dbReference type="PaxDb" id="4896-SPBC4B4.04.1"/>
<dbReference type="EnsemblFungi" id="SPBC4B4.04.1">
    <property type="protein sequence ID" value="SPBC4B4.04.1:pep"/>
    <property type="gene ID" value="SPBC4B4.04"/>
</dbReference>
<dbReference type="KEGG" id="spo:2540999"/>
<dbReference type="PomBase" id="SPBC4B4.04"/>
<dbReference type="VEuPathDB" id="FungiDB:SPBC4B4.04"/>
<dbReference type="eggNOG" id="KOG2315">
    <property type="taxonomic scope" value="Eukaryota"/>
</dbReference>
<dbReference type="HOGENOM" id="CLU_013809_0_1_1"/>
<dbReference type="InParanoid" id="O74965"/>
<dbReference type="OMA" id="RCCAYSP"/>
<dbReference type="PhylomeDB" id="O74965"/>
<dbReference type="EvolutionaryTrace" id="O74965"/>
<dbReference type="PRO" id="PR:O74965"/>
<dbReference type="Proteomes" id="UP000002485">
    <property type="component" value="Chromosome II"/>
</dbReference>
<dbReference type="GO" id="GO:0005829">
    <property type="term" value="C:cytosol"/>
    <property type="evidence" value="ECO:0007005"/>
    <property type="project" value="PomBase"/>
</dbReference>
<dbReference type="GO" id="GO:0022627">
    <property type="term" value="C:cytosolic small ribosomal subunit"/>
    <property type="evidence" value="ECO:0000318"/>
    <property type="project" value="GO_Central"/>
</dbReference>
<dbReference type="GO" id="GO:0003729">
    <property type="term" value="F:mRNA binding"/>
    <property type="evidence" value="ECO:0000318"/>
    <property type="project" value="GO_Central"/>
</dbReference>
<dbReference type="GO" id="GO:0043022">
    <property type="term" value="F:ribosome binding"/>
    <property type="evidence" value="ECO:0000250"/>
    <property type="project" value="PomBase"/>
</dbReference>
<dbReference type="GO" id="GO:0003743">
    <property type="term" value="F:translation initiation factor activity"/>
    <property type="evidence" value="ECO:0000266"/>
    <property type="project" value="PomBase"/>
</dbReference>
<dbReference type="GO" id="GO:0000049">
    <property type="term" value="F:tRNA binding"/>
    <property type="evidence" value="ECO:0000318"/>
    <property type="project" value="GO_Central"/>
</dbReference>
<dbReference type="GO" id="GO:0002183">
    <property type="term" value="P:cytoplasmic translational initiation"/>
    <property type="evidence" value="ECO:0000266"/>
    <property type="project" value="PomBase"/>
</dbReference>
<dbReference type="GO" id="GO:0006417">
    <property type="term" value="P:regulation of translation"/>
    <property type="evidence" value="ECO:0007669"/>
    <property type="project" value="UniProtKB-KW"/>
</dbReference>
<dbReference type="FunFam" id="2.130.10.10:FF:001355">
    <property type="entry name" value="Eukaryotic translation initiation factor 2A"/>
    <property type="match status" value="1"/>
</dbReference>
<dbReference type="FunFam" id="2.130.10.10:FF:002325">
    <property type="entry name" value="Eukaryotic translation initiation factor 2A"/>
    <property type="match status" value="1"/>
</dbReference>
<dbReference type="Gene3D" id="2.130.10.10">
    <property type="entry name" value="YVTN repeat-like/Quinoprotein amine dehydrogenase"/>
    <property type="match status" value="2"/>
</dbReference>
<dbReference type="InterPro" id="IPR011387">
    <property type="entry name" value="TIF2A"/>
</dbReference>
<dbReference type="InterPro" id="IPR013979">
    <property type="entry name" value="TIF_beta_prop-like"/>
</dbReference>
<dbReference type="InterPro" id="IPR015943">
    <property type="entry name" value="WD40/YVTN_repeat-like_dom_sf"/>
</dbReference>
<dbReference type="PANTHER" id="PTHR13227">
    <property type="entry name" value="EUKARYOTIC TRANSLATION INITIATION FACTOR 2A"/>
    <property type="match status" value="1"/>
</dbReference>
<dbReference type="PANTHER" id="PTHR13227:SF0">
    <property type="entry name" value="EUKARYOTIC TRANSLATION INITIATION FACTOR 2A"/>
    <property type="match status" value="1"/>
</dbReference>
<dbReference type="Pfam" id="PF08662">
    <property type="entry name" value="eIF2A"/>
    <property type="match status" value="1"/>
</dbReference>
<dbReference type="PIRSF" id="PIRSF017222">
    <property type="entry name" value="eIF2A"/>
    <property type="match status" value="1"/>
</dbReference>
<dbReference type="SUPFAM" id="SSF82171">
    <property type="entry name" value="DPP6 N-terminal domain-like"/>
    <property type="match status" value="1"/>
</dbReference>
<proteinExistence type="evidence at protein level"/>
<keyword id="KW-0002">3D-structure</keyword>
<keyword id="KW-0963">Cytoplasm</keyword>
<keyword id="KW-0396">Initiation factor</keyword>
<keyword id="KW-0648">Protein biosynthesis</keyword>
<keyword id="KW-1185">Reference proteome</keyword>
<keyword id="KW-0677">Repeat</keyword>
<keyword id="KW-0810">Translation regulation</keyword>
<keyword id="KW-0853">WD repeat</keyword>
<accession>O74965</accession>
<feature type="chain" id="PRO_0000286083" description="Eukaryotic translation initiation factor 2A">
    <location>
        <begin position="1"/>
        <end position="576"/>
    </location>
</feature>
<feature type="repeat" description="WD 1">
    <location>
        <begin position="71"/>
        <end position="119"/>
    </location>
</feature>
<feature type="repeat" description="WD 2">
    <location>
        <begin position="266"/>
        <end position="307"/>
    </location>
</feature>
<feature type="repeat" description="WD 3">
    <location>
        <begin position="308"/>
        <end position="349"/>
    </location>
</feature>
<feature type="repeat" description="WD 4">
    <location>
        <begin position="351"/>
        <end position="396"/>
    </location>
</feature>
<feature type="region of interest" description="Disordered" evidence="3">
    <location>
        <begin position="422"/>
        <end position="461"/>
    </location>
</feature>
<feature type="region of interest" description="Disordered" evidence="3">
    <location>
        <begin position="475"/>
        <end position="505"/>
    </location>
</feature>
<feature type="compositionally biased region" description="Polar residues" evidence="3">
    <location>
        <begin position="475"/>
        <end position="486"/>
    </location>
</feature>
<feature type="strand" evidence="5">
    <location>
        <begin position="6"/>
        <end position="13"/>
    </location>
</feature>
<feature type="strand" evidence="5">
    <location>
        <begin position="15"/>
        <end position="19"/>
    </location>
</feature>
<feature type="helix" evidence="5">
    <location>
        <begin position="20"/>
        <end position="22"/>
    </location>
</feature>
<feature type="strand" evidence="5">
    <location>
        <begin position="37"/>
        <end position="42"/>
    </location>
</feature>
<feature type="strand" evidence="5">
    <location>
        <begin position="46"/>
        <end position="55"/>
    </location>
</feature>
<feature type="strand" evidence="5">
    <location>
        <begin position="57"/>
        <end position="61"/>
    </location>
</feature>
<feature type="turn" evidence="5">
    <location>
        <begin position="62"/>
        <end position="64"/>
    </location>
</feature>
<feature type="strand" evidence="5">
    <location>
        <begin position="67"/>
        <end position="71"/>
    </location>
</feature>
<feature type="strand" evidence="5">
    <location>
        <begin position="75"/>
        <end position="81"/>
    </location>
</feature>
<feature type="strand" evidence="5">
    <location>
        <begin position="85"/>
        <end position="92"/>
    </location>
</feature>
<feature type="strand" evidence="5">
    <location>
        <begin position="106"/>
        <end position="113"/>
    </location>
</feature>
<feature type="strand" evidence="5">
    <location>
        <begin position="116"/>
        <end position="120"/>
    </location>
</feature>
<feature type="strand" evidence="5">
    <location>
        <begin position="138"/>
        <end position="143"/>
    </location>
</feature>
<feature type="strand" evidence="5">
    <location>
        <begin position="146"/>
        <end position="152"/>
    </location>
</feature>
<feature type="strand" evidence="5">
    <location>
        <begin position="160"/>
        <end position="162"/>
    </location>
</feature>
<feature type="strand" evidence="5">
    <location>
        <begin position="170"/>
        <end position="173"/>
    </location>
</feature>
<feature type="strand" evidence="5">
    <location>
        <begin position="176"/>
        <end position="178"/>
    </location>
</feature>
<feature type="strand" evidence="5">
    <location>
        <begin position="180"/>
        <end position="185"/>
    </location>
</feature>
<feature type="strand" evidence="5">
    <location>
        <begin position="193"/>
        <end position="201"/>
    </location>
</feature>
<feature type="strand" evidence="5">
    <location>
        <begin position="203"/>
        <end position="214"/>
    </location>
</feature>
<feature type="strand" evidence="5">
    <location>
        <begin position="220"/>
        <end position="222"/>
    </location>
</feature>
<feature type="strand" evidence="5">
    <location>
        <begin position="228"/>
        <end position="233"/>
    </location>
</feature>
<feature type="strand" evidence="5">
    <location>
        <begin position="242"/>
        <end position="247"/>
    </location>
</feature>
<feature type="strand" evidence="5">
    <location>
        <begin position="267"/>
        <end position="269"/>
    </location>
</feature>
<feature type="strand" evidence="5">
    <location>
        <begin position="271"/>
        <end position="276"/>
    </location>
</feature>
<feature type="strand" evidence="5">
    <location>
        <begin position="283"/>
        <end position="297"/>
    </location>
</feature>
<feature type="strand" evidence="5">
    <location>
        <begin position="299"/>
        <end position="301"/>
    </location>
</feature>
<feature type="strand" evidence="5">
    <location>
        <begin position="303"/>
        <end position="311"/>
    </location>
</feature>
<feature type="strand" evidence="5">
    <location>
        <begin position="314"/>
        <end position="317"/>
    </location>
</feature>
<feature type="strand" evidence="5">
    <location>
        <begin position="321"/>
        <end position="327"/>
    </location>
</feature>
<feature type="strand" evidence="5">
    <location>
        <begin position="330"/>
        <end position="333"/>
    </location>
</feature>
<feature type="strand" evidence="5">
    <location>
        <begin position="335"/>
        <end position="340"/>
    </location>
</feature>
<feature type="turn" evidence="5">
    <location>
        <begin position="341"/>
        <end position="344"/>
    </location>
</feature>
<feature type="strand" evidence="5">
    <location>
        <begin position="345"/>
        <end position="352"/>
    </location>
</feature>
<feature type="strand" evidence="5">
    <location>
        <begin position="358"/>
        <end position="361"/>
    </location>
</feature>
<feature type="strand" evidence="5">
    <location>
        <begin position="365"/>
        <end position="372"/>
    </location>
</feature>
<feature type="turn" evidence="5">
    <location>
        <begin position="374"/>
        <end position="376"/>
    </location>
</feature>
<feature type="strand" evidence="5">
    <location>
        <begin position="382"/>
        <end position="390"/>
    </location>
</feature>
<feature type="strand" evidence="5">
    <location>
        <begin position="392"/>
        <end position="397"/>
    </location>
</feature>
<feature type="strand" evidence="5">
    <location>
        <begin position="399"/>
        <end position="406"/>
    </location>
</feature>
<sequence>MSQKSQFAYRSSKSIGLVNASENYASPPKFEAISEPARNACYSPNGKLFAYATATQVVINDTESGAKLTQLPAANTYELGFSPLGKYLSTWERPGKEADGTPKQNMKVWNTETGQLVFSFVQRNQTGWNLQYTCDESLAARLVTNEVHFYETGNMSKGPIAKLRVEGISDFALSPGQNHAVAVFIPEKKGAPASVRTYSIPNFNSPLSQKTFFKADKVQFKWNALGTSLLVLTQTEVDKSNKNYYGETNLYLLGITGQFDCRVDLDREGPIHDVCWNADSKEFGIVYGYMPAKTAIFDNRANVVSIIPPAPRNTLIFSPNSRYILLAGFGNLQGSIDIFDAANNMKKITTVEAANCTYCEFSPDSQFLLTAVTSPRLRVDNSIKIWHITGAPMFYEEFNELYQAFWRPRPLNPTLLQNALTSASLPSPPTPHASASKLAAKPSVKPAGAYRPPGARGQNSTFSYRREEIDVMSSGSANKHVNSSRQRVVPGATPVIDGNKKNNKKTKPAVKQVAQPTAEVSDEKKIRSLCKKLRAIDDLKSRLNNNEKLEATQVKKIESEGKVLAELKALGWTPDA</sequence>